<sequence>MKDVQSEKDTREIPLKHVGIKKLKYPVQVLDRENKVQNTVADINMYVDLPKDFRGTHMSRFLEVFNKFHLKIDPKTIKKILDDLKQTLKAQSAKIEIMFPYFLKKKAPVTKIESYMEYLCGFSAYDGPQKCEFYTIVEVSVQTLCPCSKEISKYNAHNQRANVRIEVETSELVWFEELIEIAEDSASVPLFSLLKRPDEKFVTEKAYENPKFVEDVARDIAIRLKDNPKINWFKVEVESYESIHNHNAFACVDSTIMEV</sequence>
<evidence type="ECO:0000255" key="1">
    <source>
        <dbReference type="HAMAP-Rule" id="MF_01527"/>
    </source>
</evidence>
<organism>
    <name type="scientific">Thermosipho melanesiensis (strain DSM 12029 / CIP 104789 / BI429)</name>
    <dbReference type="NCBI Taxonomy" id="391009"/>
    <lineage>
        <taxon>Bacteria</taxon>
        <taxon>Thermotogati</taxon>
        <taxon>Thermotogota</taxon>
        <taxon>Thermotogae</taxon>
        <taxon>Thermotogales</taxon>
        <taxon>Fervidobacteriaceae</taxon>
        <taxon>Thermosipho</taxon>
    </lineage>
</organism>
<keyword id="KW-0378">Hydrolase</keyword>
<proteinExistence type="inferred from homology"/>
<protein>
    <recommendedName>
        <fullName evidence="1">GTP cyclohydrolase FolE2</fullName>
        <ecNumber evidence="1">3.5.4.16</ecNumber>
    </recommendedName>
</protein>
<comment type="function">
    <text evidence="1">Converts GTP to 7,8-dihydroneopterin triphosphate.</text>
</comment>
<comment type="catalytic activity">
    <reaction evidence="1">
        <text>GTP + H2O = 7,8-dihydroneopterin 3'-triphosphate + formate + H(+)</text>
        <dbReference type="Rhea" id="RHEA:17473"/>
        <dbReference type="ChEBI" id="CHEBI:15377"/>
        <dbReference type="ChEBI" id="CHEBI:15378"/>
        <dbReference type="ChEBI" id="CHEBI:15740"/>
        <dbReference type="ChEBI" id="CHEBI:37565"/>
        <dbReference type="ChEBI" id="CHEBI:58462"/>
        <dbReference type="EC" id="3.5.4.16"/>
    </reaction>
</comment>
<comment type="pathway">
    <text evidence="1">Cofactor biosynthesis; 7,8-dihydroneopterin triphosphate biosynthesis; 7,8-dihydroneopterin triphosphate from GTP: step 1/1.</text>
</comment>
<comment type="similarity">
    <text evidence="1">Belongs to the GTP cyclohydrolase IV family.</text>
</comment>
<name>GCH4_THEM4</name>
<gene>
    <name evidence="1" type="primary">folE2</name>
    <name type="ordered locus">Tmel_0531</name>
</gene>
<accession>A6LKE7</accession>
<reference key="1">
    <citation type="submission" date="2007-05" db="EMBL/GenBank/DDBJ databases">
        <title>Complete sequence of Thermosipho melanesiensis BI429.</title>
        <authorList>
            <consortium name="US DOE Joint Genome Institute"/>
            <person name="Copeland A."/>
            <person name="Lucas S."/>
            <person name="Lapidus A."/>
            <person name="Barry K."/>
            <person name="Glavina del Rio T."/>
            <person name="Dalin E."/>
            <person name="Tice H."/>
            <person name="Pitluck S."/>
            <person name="Chertkov O."/>
            <person name="Brettin T."/>
            <person name="Bruce D."/>
            <person name="Detter J.C."/>
            <person name="Han C."/>
            <person name="Schmutz J."/>
            <person name="Larimer F."/>
            <person name="Land M."/>
            <person name="Hauser L."/>
            <person name="Kyrpides N."/>
            <person name="Mikhailova N."/>
            <person name="Nelson K."/>
            <person name="Gogarten J.P."/>
            <person name="Noll K."/>
            <person name="Richardson P."/>
        </authorList>
    </citation>
    <scope>NUCLEOTIDE SEQUENCE [LARGE SCALE GENOMIC DNA]</scope>
    <source>
        <strain>DSM 12029 / CIP 104789 / BI429</strain>
    </source>
</reference>
<feature type="chain" id="PRO_1000068671" description="GTP cyclohydrolase FolE2">
    <location>
        <begin position="1"/>
        <end position="259"/>
    </location>
</feature>
<feature type="site" description="May be catalytically important" evidence="1">
    <location>
        <position position="145"/>
    </location>
</feature>
<dbReference type="EC" id="3.5.4.16" evidence="1"/>
<dbReference type="EMBL" id="CP000716">
    <property type="protein sequence ID" value="ABR30398.1"/>
    <property type="molecule type" value="Genomic_DNA"/>
</dbReference>
<dbReference type="RefSeq" id="WP_012056759.1">
    <property type="nucleotide sequence ID" value="NC_009616.1"/>
</dbReference>
<dbReference type="SMR" id="A6LKE7"/>
<dbReference type="STRING" id="391009.Tmel_0531"/>
<dbReference type="KEGG" id="tme:Tmel_0531"/>
<dbReference type="eggNOG" id="COG1469">
    <property type="taxonomic scope" value="Bacteria"/>
</dbReference>
<dbReference type="HOGENOM" id="CLU_062816_1_1_0"/>
<dbReference type="OrthoDB" id="9774824at2"/>
<dbReference type="UniPathway" id="UPA00848">
    <property type="reaction ID" value="UER00151"/>
</dbReference>
<dbReference type="Proteomes" id="UP000001110">
    <property type="component" value="Chromosome"/>
</dbReference>
<dbReference type="GO" id="GO:0003934">
    <property type="term" value="F:GTP cyclohydrolase I activity"/>
    <property type="evidence" value="ECO:0007669"/>
    <property type="project" value="UniProtKB-UniRule"/>
</dbReference>
<dbReference type="GO" id="GO:0046654">
    <property type="term" value="P:tetrahydrofolate biosynthetic process"/>
    <property type="evidence" value="ECO:0007669"/>
    <property type="project" value="UniProtKB-UniRule"/>
</dbReference>
<dbReference type="Gene3D" id="3.10.270.10">
    <property type="entry name" value="Urate Oxidase"/>
    <property type="match status" value="1"/>
</dbReference>
<dbReference type="HAMAP" id="MF_01527_B">
    <property type="entry name" value="GTP_cyclohydrol_B"/>
    <property type="match status" value="1"/>
</dbReference>
<dbReference type="InterPro" id="IPR022838">
    <property type="entry name" value="GTP_cyclohydrolase_FolE2"/>
</dbReference>
<dbReference type="InterPro" id="IPR003801">
    <property type="entry name" value="GTP_cyclohydrolase_FolE2/MptA"/>
</dbReference>
<dbReference type="NCBIfam" id="NF010200">
    <property type="entry name" value="PRK13674.1-1"/>
    <property type="match status" value="1"/>
</dbReference>
<dbReference type="PANTHER" id="PTHR36445">
    <property type="entry name" value="GTP CYCLOHYDROLASE MPTA"/>
    <property type="match status" value="1"/>
</dbReference>
<dbReference type="PANTHER" id="PTHR36445:SF1">
    <property type="entry name" value="GTP CYCLOHYDROLASE MPTA"/>
    <property type="match status" value="1"/>
</dbReference>
<dbReference type="Pfam" id="PF02649">
    <property type="entry name" value="GCHY-1"/>
    <property type="match status" value="1"/>
</dbReference>